<organism>
    <name type="scientific">Brassica oleracea</name>
    <name type="common">Wild cabbage</name>
    <dbReference type="NCBI Taxonomy" id="3712"/>
    <lineage>
        <taxon>Eukaryota</taxon>
        <taxon>Viridiplantae</taxon>
        <taxon>Streptophyta</taxon>
        <taxon>Embryophyta</taxon>
        <taxon>Tracheophyta</taxon>
        <taxon>Spermatophyta</taxon>
        <taxon>Magnoliopsida</taxon>
        <taxon>eudicotyledons</taxon>
        <taxon>Gunneridae</taxon>
        <taxon>Pentapetalae</taxon>
        <taxon>rosids</taxon>
        <taxon>malvids</taxon>
        <taxon>Brassicales</taxon>
        <taxon>Brassicaceae</taxon>
        <taxon>Brassiceae</taxon>
        <taxon>Brassica</taxon>
    </lineage>
</organism>
<reference key="1">
    <citation type="journal article" date="1999" name="Plant Cell">
        <title>Arabidopsis cop8 and fus4 mutations define the same gene that encodes subunit 4 of the COP9 signalosome.</title>
        <authorList>
            <person name="Serino G."/>
            <person name="Tsuge T."/>
            <person name="Kwok S."/>
            <person name="Matsui M."/>
            <person name="Wei N."/>
            <person name="Deng X.-W."/>
        </authorList>
    </citation>
    <scope>PROTEIN SEQUENCE</scope>
    <scope>COMPONENT OF THE CSN COMPLEX WITH CSN1; CSN2; CSN3; CSN4; CSN6; CSN7 AND CSN8</scope>
</reference>
<gene>
    <name type="primary">CSN5A</name>
    <name type="synonym">AJH2</name>
</gene>
<dbReference type="EC" id="3.4.-.-"/>
<dbReference type="SMR" id="P68354"/>
<dbReference type="IntAct" id="P68354">
    <property type="interactions" value="2"/>
</dbReference>
<dbReference type="GO" id="GO:0008180">
    <property type="term" value="C:COP9 signalosome"/>
    <property type="evidence" value="ECO:0007669"/>
    <property type="project" value="UniProtKB-KW"/>
</dbReference>
<dbReference type="GO" id="GO:0005737">
    <property type="term" value="C:cytoplasm"/>
    <property type="evidence" value="ECO:0007669"/>
    <property type="project" value="UniProtKB-SubCell"/>
</dbReference>
<dbReference type="GO" id="GO:0046872">
    <property type="term" value="F:metal ion binding"/>
    <property type="evidence" value="ECO:0007669"/>
    <property type="project" value="UniProtKB-KW"/>
</dbReference>
<dbReference type="GO" id="GO:0008237">
    <property type="term" value="F:metallopeptidase activity"/>
    <property type="evidence" value="ECO:0007669"/>
    <property type="project" value="UniProtKB-KW"/>
</dbReference>
<dbReference type="GO" id="GO:0006508">
    <property type="term" value="P:proteolysis"/>
    <property type="evidence" value="ECO:0007669"/>
    <property type="project" value="UniProtKB-KW"/>
</dbReference>
<dbReference type="GO" id="GO:0009585">
    <property type="term" value="P:red, far-red light phototransduction"/>
    <property type="evidence" value="ECO:0007669"/>
    <property type="project" value="UniProtKB-KW"/>
</dbReference>
<keyword id="KW-0963">Cytoplasm</keyword>
<keyword id="KW-0217">Developmental protein</keyword>
<keyword id="KW-0903">Direct protein sequencing</keyword>
<keyword id="KW-0378">Hydrolase</keyword>
<keyword id="KW-0479">Metal-binding</keyword>
<keyword id="KW-0482">Metalloprotease</keyword>
<keyword id="KW-0539">Nucleus</keyword>
<keyword id="KW-0607">Phytochrome signaling pathway</keyword>
<keyword id="KW-0645">Protease</keyword>
<keyword id="KW-0736">Signalosome</keyword>
<accession>P68354</accession>
<sequence length="34" mass="3746">KNILTVEQPDSSSSDGIFYYDEASKRVQISALAL</sequence>
<evidence type="ECO:0000250" key="1"/>
<evidence type="ECO:0000305" key="2"/>
<protein>
    <recommendedName>
        <fullName>COP9 signalosome complex subunit 5a</fullName>
        <shortName>Signalosome subunit 5a</shortName>
        <ecNumber>3.4.-.-</ecNumber>
    </recommendedName>
    <alternativeName>
        <fullName>Jun activation domain-binding homolog 2</fullName>
    </alternativeName>
</protein>
<feature type="chain" id="PRO_0000194843" description="COP9 signalosome complex subunit 5a">
    <location>
        <begin position="1" status="less than"/>
        <end position="34" status="greater than"/>
    </location>
</feature>
<feature type="non-consecutive residues" evidence="2">
    <location>
        <begin position="24"/>
        <end position="25"/>
    </location>
</feature>
<feature type="non-terminal residue">
    <location>
        <position position="1"/>
    </location>
</feature>
<feature type="non-terminal residue">
    <location>
        <position position="34"/>
    </location>
</feature>
<comment type="function">
    <text evidence="1">Probable protease subunit of the COP9 signalosome complex (CSN), a complex involved in various cellular and developmental processes such as photomorphogenesis and auxin and jasmonate responses. The CSN complex is an essential regulator of the ubiquitin (Ubl) conjugation pathway by mediating the deneddylation of the cullin subunits of the SCF-type E3 ligase complexes, leading to decrease the Ubl ligase activity of SCF. In the complex, it probably acts as the catalytic center that mediates the cleavage of Nedd8 from cullins. It however has no metalloprotease activity by itself and requires the other subunits of the CSN complex. The CSN complex is involved in repression of photomorphogenesis in darkness by regulating the activity of COP1-containing Ubl ligase complexes (By similarity).</text>
</comment>
<comment type="cofactor">
    <cofactor evidence="1">
        <name>a divalent metal cation</name>
        <dbReference type="ChEBI" id="CHEBI:60240"/>
    </cofactor>
</comment>
<comment type="subunit">
    <text>Component of the CSN complex, probably composed of CSN1, CSN2, CSN3, CSN4, CSN5 (CSN5A or CSN5B), CSN6 (CSN6A or CSN6B), CSN7 and CSN8.</text>
</comment>
<comment type="subcellular location">
    <subcellularLocation>
        <location>Cytoplasm</location>
    </subcellularLocation>
    <subcellularLocation>
        <location>Nucleus</location>
    </subcellularLocation>
</comment>
<comment type="similarity">
    <text evidence="2">Belongs to the peptidase M67A family. CSN5 subfamily.</text>
</comment>
<proteinExistence type="evidence at protein level"/>
<name>CSN5A_BRAOL</name>